<reference key="1">
    <citation type="submission" date="2007-03" db="EMBL/GenBank/DDBJ databases">
        <authorList>
            <person name="Heidelberg J."/>
        </authorList>
    </citation>
    <scope>NUCLEOTIDE SEQUENCE [LARGE SCALE GENOMIC DNA]</scope>
    <source>
        <strain>ATCC 39541 / Classical Ogawa 395 / O395</strain>
    </source>
</reference>
<reference key="2">
    <citation type="journal article" date="2008" name="PLoS ONE">
        <title>A recalibrated molecular clock and independent origins for the cholera pandemic clones.</title>
        <authorList>
            <person name="Feng L."/>
            <person name="Reeves P.R."/>
            <person name="Lan R."/>
            <person name="Ren Y."/>
            <person name="Gao C."/>
            <person name="Zhou Z."/>
            <person name="Ren Y."/>
            <person name="Cheng J."/>
            <person name="Wang W."/>
            <person name="Wang J."/>
            <person name="Qian W."/>
            <person name="Li D."/>
            <person name="Wang L."/>
        </authorList>
    </citation>
    <scope>NUCLEOTIDE SEQUENCE [LARGE SCALE GENOMIC DNA]</scope>
    <source>
        <strain>ATCC 39541 / Classical Ogawa 395 / O395</strain>
    </source>
</reference>
<organism>
    <name type="scientific">Vibrio cholerae serotype O1 (strain ATCC 39541 / Classical Ogawa 395 / O395)</name>
    <dbReference type="NCBI Taxonomy" id="345073"/>
    <lineage>
        <taxon>Bacteria</taxon>
        <taxon>Pseudomonadati</taxon>
        <taxon>Pseudomonadota</taxon>
        <taxon>Gammaproteobacteria</taxon>
        <taxon>Vibrionales</taxon>
        <taxon>Vibrionaceae</taxon>
        <taxon>Vibrio</taxon>
    </lineage>
</organism>
<feature type="chain" id="PRO_1000071200" description="Ribosomal RNA small subunit methyltransferase G">
    <location>
        <begin position="1"/>
        <end position="210"/>
    </location>
</feature>
<feature type="binding site" evidence="1">
    <location>
        <position position="76"/>
    </location>
    <ligand>
        <name>S-adenosyl-L-methionine</name>
        <dbReference type="ChEBI" id="CHEBI:59789"/>
    </ligand>
</feature>
<feature type="binding site" evidence="1">
    <location>
        <position position="81"/>
    </location>
    <ligand>
        <name>S-adenosyl-L-methionine</name>
        <dbReference type="ChEBI" id="CHEBI:59789"/>
    </ligand>
</feature>
<feature type="binding site" evidence="1">
    <location>
        <begin position="127"/>
        <end position="128"/>
    </location>
    <ligand>
        <name>S-adenosyl-L-methionine</name>
        <dbReference type="ChEBI" id="CHEBI:59789"/>
    </ligand>
</feature>
<feature type="binding site" evidence="1">
    <location>
        <position position="142"/>
    </location>
    <ligand>
        <name>S-adenosyl-L-methionine</name>
        <dbReference type="ChEBI" id="CHEBI:59789"/>
    </ligand>
</feature>
<evidence type="ECO:0000255" key="1">
    <source>
        <dbReference type="HAMAP-Rule" id="MF_00074"/>
    </source>
</evidence>
<comment type="function">
    <text evidence="1">Specifically methylates the N7 position of guanine in position 527 of 16S rRNA.</text>
</comment>
<comment type="catalytic activity">
    <reaction evidence="1">
        <text>guanosine(527) in 16S rRNA + S-adenosyl-L-methionine = N(7)-methylguanosine(527) in 16S rRNA + S-adenosyl-L-homocysteine</text>
        <dbReference type="Rhea" id="RHEA:42732"/>
        <dbReference type="Rhea" id="RHEA-COMP:10209"/>
        <dbReference type="Rhea" id="RHEA-COMP:10210"/>
        <dbReference type="ChEBI" id="CHEBI:57856"/>
        <dbReference type="ChEBI" id="CHEBI:59789"/>
        <dbReference type="ChEBI" id="CHEBI:74269"/>
        <dbReference type="ChEBI" id="CHEBI:74480"/>
        <dbReference type="EC" id="2.1.1.170"/>
    </reaction>
</comment>
<comment type="subcellular location">
    <subcellularLocation>
        <location evidence="1">Cytoplasm</location>
    </subcellularLocation>
</comment>
<comment type="similarity">
    <text evidence="1">Belongs to the methyltransferase superfamily. RNA methyltransferase RsmG family.</text>
</comment>
<name>RSMG_VIBC3</name>
<gene>
    <name evidence="1" type="primary">rsmG</name>
    <name type="synonym">gidB</name>
    <name type="ordered locus">VC0395_A2518</name>
    <name type="ordered locus">VC395_0181</name>
</gene>
<proteinExistence type="inferred from homology"/>
<sequence length="210" mass="23578">MNPLRVKLDALISKTSLTVTEQQREQLVGYVQLLDKWNKAYNLTSVRDPMEMLVKHILDSLVVSPHLVGERFIDVGSGPGLPGIPLAIMHPDKEFVLLDSLGKRIRFLKQVIHDLKINNVLPVQSRVEEFDPESGFDGVLSRAFASMTDMVNWCQHLPKPNAGVFLALKGVRPDDEITLLPEWCSVTDIKALQVPELEGERHLVILSRKG</sequence>
<accession>A5F469</accession>
<accession>C3M329</accession>
<protein>
    <recommendedName>
        <fullName evidence="1">Ribosomal RNA small subunit methyltransferase G</fullName>
        <ecNumber evidence="1">2.1.1.170</ecNumber>
    </recommendedName>
    <alternativeName>
        <fullName evidence="1">16S rRNA 7-methylguanosine methyltransferase</fullName>
        <shortName evidence="1">16S rRNA m7G methyltransferase</shortName>
    </alternativeName>
</protein>
<dbReference type="EC" id="2.1.1.170" evidence="1"/>
<dbReference type="EMBL" id="CP000627">
    <property type="protein sequence ID" value="ABQ20290.1"/>
    <property type="molecule type" value="Genomic_DNA"/>
</dbReference>
<dbReference type="EMBL" id="CP001235">
    <property type="protein sequence ID" value="ACP08208.1"/>
    <property type="molecule type" value="Genomic_DNA"/>
</dbReference>
<dbReference type="RefSeq" id="WP_001068942.1">
    <property type="nucleotide sequence ID" value="NZ_JAACZH010000018.1"/>
</dbReference>
<dbReference type="SMR" id="A5F469"/>
<dbReference type="KEGG" id="vco:VC0395_A2518"/>
<dbReference type="KEGG" id="vcr:VC395_0181"/>
<dbReference type="PATRIC" id="fig|345073.21.peg.170"/>
<dbReference type="eggNOG" id="COG0357">
    <property type="taxonomic scope" value="Bacteria"/>
</dbReference>
<dbReference type="HOGENOM" id="CLU_065341_2_0_6"/>
<dbReference type="OrthoDB" id="9808773at2"/>
<dbReference type="Proteomes" id="UP000000249">
    <property type="component" value="Chromosome 2"/>
</dbReference>
<dbReference type="GO" id="GO:0005829">
    <property type="term" value="C:cytosol"/>
    <property type="evidence" value="ECO:0007669"/>
    <property type="project" value="TreeGrafter"/>
</dbReference>
<dbReference type="GO" id="GO:0070043">
    <property type="term" value="F:rRNA (guanine-N7-)-methyltransferase activity"/>
    <property type="evidence" value="ECO:0007669"/>
    <property type="project" value="UniProtKB-UniRule"/>
</dbReference>
<dbReference type="CDD" id="cd02440">
    <property type="entry name" value="AdoMet_MTases"/>
    <property type="match status" value="1"/>
</dbReference>
<dbReference type="FunFam" id="3.40.50.150:FF:000032">
    <property type="entry name" value="Ribosomal RNA small subunit methyltransferase G"/>
    <property type="match status" value="1"/>
</dbReference>
<dbReference type="Gene3D" id="3.40.50.150">
    <property type="entry name" value="Vaccinia Virus protein VP39"/>
    <property type="match status" value="1"/>
</dbReference>
<dbReference type="HAMAP" id="MF_00074">
    <property type="entry name" value="16SrRNA_methyltr_G"/>
    <property type="match status" value="1"/>
</dbReference>
<dbReference type="InterPro" id="IPR003682">
    <property type="entry name" value="rRNA_ssu_MeTfrase_G"/>
</dbReference>
<dbReference type="InterPro" id="IPR029063">
    <property type="entry name" value="SAM-dependent_MTases_sf"/>
</dbReference>
<dbReference type="NCBIfam" id="TIGR00138">
    <property type="entry name" value="rsmG_gidB"/>
    <property type="match status" value="1"/>
</dbReference>
<dbReference type="PANTHER" id="PTHR31760">
    <property type="entry name" value="S-ADENOSYL-L-METHIONINE-DEPENDENT METHYLTRANSFERASES SUPERFAMILY PROTEIN"/>
    <property type="match status" value="1"/>
</dbReference>
<dbReference type="PANTHER" id="PTHR31760:SF0">
    <property type="entry name" value="S-ADENOSYL-L-METHIONINE-DEPENDENT METHYLTRANSFERASES SUPERFAMILY PROTEIN"/>
    <property type="match status" value="1"/>
</dbReference>
<dbReference type="Pfam" id="PF02527">
    <property type="entry name" value="GidB"/>
    <property type="match status" value="1"/>
</dbReference>
<dbReference type="PIRSF" id="PIRSF003078">
    <property type="entry name" value="GidB"/>
    <property type="match status" value="1"/>
</dbReference>
<dbReference type="SUPFAM" id="SSF53335">
    <property type="entry name" value="S-adenosyl-L-methionine-dependent methyltransferases"/>
    <property type="match status" value="1"/>
</dbReference>
<keyword id="KW-0963">Cytoplasm</keyword>
<keyword id="KW-0489">Methyltransferase</keyword>
<keyword id="KW-0698">rRNA processing</keyword>
<keyword id="KW-0949">S-adenosyl-L-methionine</keyword>
<keyword id="KW-0808">Transferase</keyword>